<comment type="function">
    <text evidence="8 9 11 13 14 16 18">A site-2 regulated intramembrane protease (S2P) that cleaves the peptide bond between 'Ala-108' and 'Cys-109' in the transmembrane region of RseA. Part of a regulated intramembrane proteolysis (RIP) cascade. Acts on DegS-cleaved RseA to release the cytoplasmic domain of RseA, residue 'Val-148' of RseA may be required for this. This provides the cell with sigma-E (RpoE) activity through the proteolysis of RseA. Can also cleave sequences in transmembrane regions of other proteins (such as LacY) as well as liberated signal peptides of beta-lactamase, OmpF, LivK, SecM, PhoA, LivJ, OmpC, Lpp and TorA, probably within the membrane. Cleaves FecR within its transmembrane region to release an N-terminal cytoplasmic fragment which binds to sigma factor FecI, allowing it to activate transcription of the fecABCDE operon which mediates ferric citrate transport (PubMed:33865858).</text>
</comment>
<comment type="cofactor">
    <cofactor evidence="19">
        <name>Zn(2+)</name>
        <dbReference type="ChEBI" id="CHEBI:29105"/>
    </cofactor>
</comment>
<comment type="activity regulation">
    <text evidence="16">Inhibited by Zn(2+) chelator 1,10-phenanthroline.</text>
</comment>
<comment type="subunit">
    <text evidence="10 13">Interacts with RseA; the third transmembrane domain can be cross-linked to the transmembrane domain of RseA.</text>
</comment>
<comment type="subcellular location">
    <subcellularLocation>
        <location evidence="5 6 7 12">Cell inner membrane</location>
        <topology evidence="5 6 7 12">Multi-pass membrane protein</topology>
    </subcellularLocation>
</comment>
<comment type="induction">
    <text evidence="4">Part of the sigma-E regulon. Also has a primary sigma-70 factor promoter.</text>
</comment>
<comment type="domain">
    <text evidence="6 10 14 15 17">The 2 circularly premutated PDZ domains act to negatively regulate protease action on intact RseA; mutations in PDZ 1 (PDZ-N) have a more deleterious effect than similar mutations in PDZ 2 (PDZ-C). A 31 residue insertion in PDZ-C (between Val-261 and Met-262) domain inhibits protease activity, whereas deletion of residues 203-279 alleviates the PDZ-inhibition, allowing cleavage of intact RseA.</text>
</comment>
<comment type="disruption phenotype">
    <text evidence="4 5 6 8 9 17">Essential. Depletion experiments lead to cessation of growth, elongated cells and limited lysis, as well as decreased amounts of sigma-E. Not essential in an rseA deletion strain, when sigma-E is overexpressed or in ompA-ompC deletion strain. In the latter has severely decreased growth at 20 degrees Celsius. Accumulation of an RseA proteolysis intermediate.</text>
</comment>
<comment type="miscellaneous">
    <text>Regulated intramembrane proteolysis (RIP) occurs when an extracytoplasmic signal triggers a concerted proteolytic cascade to transmit information and elicit cellular responses. A membrane-spanning regulatory substrate protein is first cut extracytoplasmically (site-1 protease, S1P), then within the membrane itself (site-2 protease, S2P, this enzyme), while cytoplasmic proteases finish degrading the regulatory protein, liberating the effector protein.</text>
</comment>
<comment type="similarity">
    <text evidence="19">Belongs to the peptidase M50B family.</text>
</comment>
<comment type="caution">
    <text evidence="20">Was originally thought to be a negative regulator of sigma-E function and to act directly on sigma-E and RpoH; this may not be physiologically relevant.</text>
</comment>
<protein>
    <recommendedName>
        <fullName>Regulator of sigma-E protease RseP</fullName>
        <ecNumber>3.4.24.-</ecNumber>
    </recommendedName>
    <alternativeName>
        <fullName>S2P endopeptidase</fullName>
    </alternativeName>
    <alternativeName>
        <fullName>Site-2 protease RseP</fullName>
        <shortName>S2P protease RseP</shortName>
    </alternativeName>
    <alternativeName>
        <fullName>Site-2-type intramembrane protease</fullName>
    </alternativeName>
</protein>
<proteinExistence type="evidence at protein level"/>
<sequence length="450" mass="49071">MLSFLWDLASFIVALGVLITVHEFGHFWVARRCGVRVERFSIGFGKALWRRTDKLGTEYVIALIPLGGYVKMLDERAEPVVPELRHHAFNNKSVGQRAAIIAAGPVANFIFAIFAYWLVFIIGVPGVRPVVGEIAANSIAAEAQIAPGTELKAVDGIETPDWDAVRLQLVDKIGDESTTITVAPFGSDQRRDVKLDLRHWAFEPDKEDPVSSLGIRPRGPQIEPVLENVQPNSAASKAGLQAGDRIVKVDGQPLTQWVTFVMLVRDNPGKSLALEIERQGSPLSLTLIPESKPGNGKAIGFVGIEPKVIPLPDEYKVVRQYGPFNAIVEATDKTWQLMKLTVSMLGKLITGDVKLNNLSGPISIAKGAGMTAELGVVYYLPFLALISVNLGIINLFPLPVLDGGHLLFLAIEKIKGGPVSERVQDFCYRIGSILLVLLMGLALFNDFSRL</sequence>
<evidence type="ECO:0000255" key="1"/>
<evidence type="ECO:0000255" key="2">
    <source>
        <dbReference type="PROSITE-ProRule" id="PRU00143"/>
    </source>
</evidence>
<evidence type="ECO:0000255" key="3">
    <source>
        <dbReference type="PROSITE-ProRule" id="PRU10095"/>
    </source>
</evidence>
<evidence type="ECO:0000269" key="4">
    <source>
    </source>
</evidence>
<evidence type="ECO:0000269" key="5">
    <source>
    </source>
</evidence>
<evidence type="ECO:0000269" key="6">
    <source>
    </source>
</evidence>
<evidence type="ECO:0000269" key="7">
    <source>
    </source>
</evidence>
<evidence type="ECO:0000269" key="8">
    <source>
    </source>
</evidence>
<evidence type="ECO:0000269" key="9">
    <source>
    </source>
</evidence>
<evidence type="ECO:0000269" key="10">
    <source>
    </source>
</evidence>
<evidence type="ECO:0000269" key="11">
    <source>
    </source>
</evidence>
<evidence type="ECO:0000269" key="12">
    <source>
    </source>
</evidence>
<evidence type="ECO:0000269" key="13">
    <source>
    </source>
</evidence>
<evidence type="ECO:0000269" key="14">
    <source>
    </source>
</evidence>
<evidence type="ECO:0000269" key="15">
    <source>
    </source>
</evidence>
<evidence type="ECO:0000269" key="16">
    <source>
    </source>
</evidence>
<evidence type="ECO:0000269" key="17">
    <source>
    </source>
</evidence>
<evidence type="ECO:0000269" key="18">
    <source>
    </source>
</evidence>
<evidence type="ECO:0000305" key="19"/>
<evidence type="ECO:0000305" key="20">
    <source>
    </source>
</evidence>
<evidence type="ECO:0000305" key="21">
    <source>
    </source>
</evidence>
<evidence type="ECO:0007829" key="22">
    <source>
        <dbReference type="PDB" id="2ZPM"/>
    </source>
</evidence>
<evidence type="ECO:0007829" key="23">
    <source>
        <dbReference type="PDB" id="3ID1"/>
    </source>
</evidence>
<evidence type="ECO:0007829" key="24">
    <source>
        <dbReference type="PDB" id="3ID2"/>
    </source>
</evidence>
<evidence type="ECO:0007829" key="25">
    <source>
        <dbReference type="PDB" id="3ID4"/>
    </source>
</evidence>
<evidence type="ECO:0007829" key="26">
    <source>
        <dbReference type="PDB" id="7W6X"/>
    </source>
</evidence>
<accession>P0AEH1</accession>
<accession>P37764</accession>
<keyword id="KW-0002">3D-structure</keyword>
<keyword id="KW-0997">Cell inner membrane</keyword>
<keyword id="KW-1003">Cell membrane</keyword>
<keyword id="KW-0378">Hydrolase</keyword>
<keyword id="KW-0472">Membrane</keyword>
<keyword id="KW-0479">Metal-binding</keyword>
<keyword id="KW-0482">Metalloprotease</keyword>
<keyword id="KW-0645">Protease</keyword>
<keyword id="KW-1185">Reference proteome</keyword>
<keyword id="KW-0677">Repeat</keyword>
<keyword id="KW-0812">Transmembrane</keyword>
<keyword id="KW-1133">Transmembrane helix</keyword>
<keyword id="KW-0862">Zinc</keyword>
<reference key="1">
    <citation type="journal article" date="2001" name="J. Biol. Chem.">
        <title>Characterization of the Escherichia coli sigma E regulon.</title>
        <authorList>
            <person name="Dartigalongue C."/>
            <person name="Missiakas D."/>
            <person name="Raina S."/>
        </authorList>
    </citation>
    <scope>NUCLEOTIDE SEQUENCE [GENOMIC DNA]</scope>
    <scope>INDUCTION</scope>
    <scope>DISRUPTION PHENOTYPE</scope>
</reference>
<reference key="2">
    <citation type="submission" date="1996-02" db="EMBL/GenBank/DDBJ databases">
        <title>Systematic sequencing of the Escherichia coli genome: analysis of the 4.0 - 6.0 min (189,987 - 281,416bp) region.</title>
        <authorList>
            <person name="Takemoto K."/>
            <person name="Mori H."/>
            <person name="Murayama N."/>
            <person name="Kataoka K."/>
            <person name="Yano M."/>
            <person name="Itoh T."/>
            <person name="Yamamoto Y."/>
            <person name="Inokuchi H."/>
            <person name="Miki T."/>
            <person name="Hatada E."/>
            <person name="Fukuda R."/>
            <person name="Ichihara S."/>
            <person name="Mizuno T."/>
            <person name="Makino K."/>
            <person name="Nakata A."/>
            <person name="Yura T."/>
            <person name="Sampei G."/>
            <person name="Mizobuchi K."/>
        </authorList>
    </citation>
    <scope>NUCLEOTIDE SEQUENCE [LARGE SCALE GENOMIC DNA]</scope>
    <source>
        <strain>K12 / W3110 / ATCC 27325 / DSM 5911</strain>
    </source>
</reference>
<reference key="3">
    <citation type="submission" date="1997-01" db="EMBL/GenBank/DDBJ databases">
        <title>Sequence of minutes 4-25 of Escherichia coli.</title>
        <authorList>
            <person name="Chung E."/>
            <person name="Allen E."/>
            <person name="Araujo R."/>
            <person name="Aparicio A.M."/>
            <person name="Davis K."/>
            <person name="Duncan M."/>
            <person name="Federspiel N."/>
            <person name="Hyman R."/>
            <person name="Kalman S."/>
            <person name="Komp C."/>
            <person name="Kurdi O."/>
            <person name="Lew H."/>
            <person name="Lin D."/>
            <person name="Namath A."/>
            <person name="Oefner P."/>
            <person name="Roberts D."/>
            <person name="Schramm S."/>
            <person name="Davis R.W."/>
        </authorList>
    </citation>
    <scope>NUCLEOTIDE SEQUENCE [LARGE SCALE GENOMIC DNA]</scope>
    <source>
        <strain>K12 / MG1655 / ATCC 47076</strain>
    </source>
</reference>
<reference key="4">
    <citation type="journal article" date="1997" name="Science">
        <title>The complete genome sequence of Escherichia coli K-12.</title>
        <authorList>
            <person name="Blattner F.R."/>
            <person name="Plunkett G. III"/>
            <person name="Bloch C.A."/>
            <person name="Perna N.T."/>
            <person name="Burland V."/>
            <person name="Riley M."/>
            <person name="Collado-Vides J."/>
            <person name="Glasner J.D."/>
            <person name="Rode C.K."/>
            <person name="Mayhew G.F."/>
            <person name="Gregor J."/>
            <person name="Davis N.W."/>
            <person name="Kirkpatrick H.A."/>
            <person name="Goeden M.A."/>
            <person name="Rose D.J."/>
            <person name="Mau B."/>
            <person name="Shao Y."/>
        </authorList>
    </citation>
    <scope>NUCLEOTIDE SEQUENCE [LARGE SCALE GENOMIC DNA]</scope>
    <source>
        <strain>K12 / MG1655 / ATCC 47076</strain>
    </source>
</reference>
<reference key="5">
    <citation type="journal article" date="2006" name="Mol. Syst. Biol.">
        <title>Highly accurate genome sequences of Escherichia coli K-12 strains MG1655 and W3110.</title>
        <authorList>
            <person name="Hayashi K."/>
            <person name="Morooka N."/>
            <person name="Yamamoto Y."/>
            <person name="Fujita K."/>
            <person name="Isono K."/>
            <person name="Choi S."/>
            <person name="Ohtsubo E."/>
            <person name="Baba T."/>
            <person name="Wanner B.L."/>
            <person name="Mori H."/>
            <person name="Horiuchi T."/>
        </authorList>
    </citation>
    <scope>NUCLEOTIDE SEQUENCE [LARGE SCALE GENOMIC DNA]</scope>
    <source>
        <strain>K12 / W3110 / ATCC 27325 / DSM 5911</strain>
    </source>
</reference>
<reference key="6">
    <citation type="journal article" date="1985" name="J. Biol. Chem.">
        <title>Molecular cloning and sequencing of the gene for CDP-diglyceride synthetase of Escherichia coli.</title>
        <authorList>
            <person name="Icho T."/>
            <person name="Sparrow C.P."/>
            <person name="Raetz C.R.H."/>
        </authorList>
    </citation>
    <scope>NUCLEOTIDE SEQUENCE [GENOMIC DNA] OF 1-103</scope>
</reference>
<reference key="7">
    <citation type="journal article" date="1994" name="Nucleic Acids Res.">
        <title>Intrinsic and extrinsic approaches for detecting genes in a bacterial genome.</title>
        <authorList>
            <person name="Borodovsky M."/>
            <person name="Rudd K.E."/>
            <person name="Koonin E.V."/>
        </authorList>
    </citation>
    <scope>IDENTIFICATION</scope>
</reference>
<reference key="8">
    <citation type="journal article" date="2001" name="EMBO J.">
        <title>EcfE, a new essential inner membrane protease: its role in the regulation of heat shock response in Escherichia coli.</title>
        <authorList>
            <person name="Dartigalongue C."/>
            <person name="Loferer H."/>
            <person name="Raina S."/>
        </authorList>
    </citation>
    <scope>SUBCELLULAR LOCATION</scope>
    <scope>DISRUPTION PHENOTYPE</scope>
    <scope>MUTAGENESIS OF HIS-22</scope>
</reference>
<reference key="9">
    <citation type="journal article" date="2001" name="Gene">
        <title>Characterization of the yaeL gene product and its S2P-protease motifs in Escherichia coli.</title>
        <authorList>
            <person name="Kanehara K."/>
            <person name="Akiyama Y."/>
            <person name="Ito K."/>
        </authorList>
    </citation>
    <scope>DISCUSSION OF FUNCTION</scope>
    <scope>SUBCELLULAR LOCATION</scope>
    <scope>TOPOLOGY</scope>
    <scope>DOMAIN</scope>
    <scope>DISRUPTION PHENOTYPE</scope>
    <scope>MUTAGENESIS OF HIS-22; GLU-23; HIS-26; VAL-261 AND ASP-402</scope>
    <source>
        <strain>K12 / W3110 / ATCC 27325 / DSM 5911</strain>
    </source>
</reference>
<reference key="10">
    <citation type="journal article" date="2002" name="Genes Dev.">
        <title>YaeL (EcfE) activates the sigma(E) pathway of stress response through a site-2 cleavage of anti-sigma(E), RseA.</title>
        <authorList>
            <person name="Kanehara K."/>
            <person name="Ito K."/>
            <person name="Akiyama Y."/>
        </authorList>
    </citation>
    <scope>FUNCTION IN CLEAVAGE OF RSEA</scope>
    <scope>DISRUPTION PHENOTYPE</scope>
    <scope>MUTAGENESIS OF HIS-22 AND ASP-402</scope>
    <source>
        <strain>K12</strain>
    </source>
</reference>
<reference key="11">
    <citation type="journal article" date="2002" name="Genes Dev.">
        <title>DegS and YaeL participate sequentially in the cleavage of RseA to activate the sigma(E)-dependent extracytoplasmic stress response.</title>
        <authorList>
            <person name="Alba B.M."/>
            <person name="Leeds J.A."/>
            <person name="Onufryk C."/>
            <person name="Lu C.Z."/>
            <person name="Gross C.A."/>
        </authorList>
    </citation>
    <scope>FUNCTION IN THE CLEAVAGE OF RSEA</scope>
    <scope>POSSIBLE ACTIVE SITE</scope>
    <scope>DISRUPTION PHENOTYPE</scope>
    <scope>MUTAGENESIS OF GLU-23</scope>
    <source>
        <strain>K12</strain>
    </source>
</reference>
<reference key="12">
    <citation type="journal article" date="2002" name="Proc. Natl. Acad. Sci. U.S.A.">
        <title>Rapid topology mapping of Escherichia coli inner-membrane proteins by prediction and PhoA/GFP fusion analysis.</title>
        <authorList>
            <person name="Drew D."/>
            <person name="Sjoestrand D."/>
            <person name="Nilsson J."/>
            <person name="Urbig T."/>
            <person name="Chin C.-N."/>
            <person name="de Gier J.-W."/>
            <person name="von Heijne G."/>
        </authorList>
    </citation>
    <scope>SUBCELLULAR LOCATION</scope>
    <source>
        <strain>K12 / JM109 / ATCC 53323</strain>
    </source>
</reference>
<reference key="13">
    <citation type="journal article" date="2003" name="EMBO J.">
        <title>YaeL proteolysis of RseA is controlled by the PDZ domain of YaeL and a Gln-rich region of RseA.</title>
        <authorList>
            <person name="Kanehara K."/>
            <person name="Ito K."/>
            <person name="Akiyama Y."/>
        </authorList>
    </citation>
    <scope>INTERACTION WITH RSEA</scope>
    <scope>DOMAIN</scope>
    <scope>MUTAGENESIS OF GLY-214; 234-ALA-ALA-235; GLY-243; ASP-244 AND ILE-246</scope>
    <source>
        <strain>K12 / AD16</strain>
    </source>
</reference>
<reference key="14">
    <citation type="journal article" date="2004" name="EMBO J.">
        <title>RseP (YaeL), an Escherichia coli RIP protease, cleaves transmembrane sequences.</title>
        <authorList>
            <person name="Akiyama Y."/>
            <person name="Kanehara K."/>
            <person name="Ito K."/>
        </authorList>
    </citation>
    <scope>FUNCTION IN THE CLEAVAGE OF RSEA</scope>
    <scope>MUTAGENESIS OF HIS-22</scope>
</reference>
<reference key="15">
    <citation type="journal article" date="2005" name="Science">
        <title>Global topology analysis of the Escherichia coli inner membrane proteome.</title>
        <authorList>
            <person name="Daley D.O."/>
            <person name="Rapp M."/>
            <person name="Granseth E."/>
            <person name="Melen K."/>
            <person name="Drew D."/>
            <person name="von Heijne G."/>
        </authorList>
    </citation>
    <scope>SUBCELLULAR LOCATION</scope>
    <source>
        <strain>K12 / MG1655 / ATCC 47076</strain>
    </source>
</reference>
<reference key="16">
    <citation type="journal article" date="2008" name="J. Biol. Chem.">
        <title>Substrate recognition and binding by RseP, an Escherichia coli intramembrane protease.</title>
        <authorList>
            <person name="Koide K."/>
            <person name="Ito K."/>
            <person name="Akiyama Y."/>
        </authorList>
    </citation>
    <scope>FUNCTION IN CLEAVAGE OF RSEA</scope>
    <scope>INTERACTION WITH RSEA</scope>
    <scope>SUBSTRATE RECOGNITION</scope>
    <scope>MUTAGENESIS OF HIS-22; GLU-23; ASN-389; ASN-394; PRO-397 AND PRO-399</scope>
    <source>
        <strain>K12 / AD16</strain>
    </source>
</reference>
<reference key="17">
    <citation type="journal article" date="2011" name="Proc. Natl. Acad. Sci. U.S.A.">
        <title>Post-liberation cleavage of signal peptides is catalyzed by the site-2 protease (S2P) in bacteria.</title>
        <authorList>
            <person name="Saito A."/>
            <person name="Hizukuri Y."/>
            <person name="Matsuo E."/>
            <person name="Chiba S."/>
            <person name="Mori H."/>
            <person name="Nishimura O."/>
            <person name="Ito K."/>
            <person name="Akiyama Y."/>
        </authorList>
    </citation>
    <scope>FUNCTION IN CLEAVAGE OF SIGNAL PEPTIDES</scope>
    <scope>ACTIVITY REGULATION</scope>
    <scope>MUTAGENESIS OF HIS-22</scope>
    <source>
        <strain>K12</strain>
    </source>
</reference>
<reference key="18">
    <citation type="journal article" date="2012" name="Mol. Microbiol.">
        <title>PDZ domains of RseP are not essential for sequential cleavage of RseA or stress-induced sigma(E) activation in vivo.</title>
        <authorList>
            <person name="Hizukuri Y."/>
            <person name="Akiyama Y."/>
        </authorList>
    </citation>
    <scope>DOMAIN</scope>
    <scope>DISRUPTION PHENOTYPE</scope>
    <scope>MUTAGENESIS OF ILE-215 AND ILE-304</scope>
    <source>
        <strain>K12</strain>
    </source>
</reference>
<reference key="19">
    <citation type="journal article" date="2021" name="J. Biol. Chem.">
        <title>The Escherichia coli S2P intramembrane protease RseP regulates ferric citrate uptake by cleaving the sigma factor regulator FecR.</title>
        <authorList>
            <person name="Yokoyama T."/>
            <person name="Niinae T."/>
            <person name="Tsumagari K."/>
            <person name="Imami K."/>
            <person name="Ishihama Y."/>
            <person name="Hizukuri Y."/>
            <person name="Akiyama Y."/>
        </authorList>
    </citation>
    <scope>FUNCTION</scope>
    <scope>MUTAGENESIS OF GLU-23</scope>
</reference>
<reference key="20">
    <citation type="journal article" date="2008" name="J. Biol. Chem.">
        <title>A pair of circularly permutated PDZ domains control RseP, the S2P family intramembrane protease of Escherichia coli.</title>
        <authorList>
            <person name="Inaba K."/>
            <person name="Suzuki M."/>
            <person name="Maegawa K."/>
            <person name="Akiyama S."/>
            <person name="Ito K."/>
            <person name="Akiyama Y."/>
        </authorList>
    </citation>
    <scope>X-RAY CRYSTALLOGRAPHY (1.70 ANGSTROMS) OF 127-221</scope>
    <scope>X-RAY CRYSTALLOGRAPHY (0.98 ANGSTROMS) OF 222-309</scope>
    <scope>FUNCTION IN CLEAVAGE OF RSEA</scope>
    <scope>DOMAIN</scope>
    <scope>MUTAGENESIS OF ALA-115; ILE-145; LEU-151; TRP-162; LEU-169; LEU-213 AND GLY-214</scope>
    <source>
        <strain>K12</strain>
    </source>
</reference>
<reference key="21">
    <citation type="journal article" date="2009" name="Proc. Natl. Acad. Sci. U.S.A.">
        <title>Cleavage of RseA by RseP requires a carboxyl-terminal hydrophobic amino acid following DegS cleavage.</title>
        <authorList>
            <person name="Li X."/>
            <person name="Wang B."/>
            <person name="Feng L."/>
            <person name="Kang H."/>
            <person name="Qi Y."/>
            <person name="Wang J."/>
            <person name="Shi Y."/>
        </authorList>
    </citation>
    <scope>X-RAY CRYSTALLOGRAPHY (1.67 ANGSTROMS) OF 127-220</scope>
    <scope>X-RAY CRYSTALLOGRAPHY (1.60 ANGSTROMS) OF 222-307</scope>
    <scope>DOMAIN</scope>
    <scope>MUTAGENESIS OF ILE-215 AND ILE-304</scope>
</reference>
<dbReference type="EC" id="3.4.24.-"/>
<dbReference type="EMBL" id="AF407012">
    <property type="protein sequence ID" value="AAL01378.1"/>
    <property type="molecule type" value="Genomic_DNA"/>
</dbReference>
<dbReference type="EMBL" id="U70214">
    <property type="protein sequence ID" value="AAB08605.1"/>
    <property type="molecule type" value="Genomic_DNA"/>
</dbReference>
<dbReference type="EMBL" id="U00096">
    <property type="protein sequence ID" value="AAC73287.1"/>
    <property type="molecule type" value="Genomic_DNA"/>
</dbReference>
<dbReference type="EMBL" id="AP009048">
    <property type="protein sequence ID" value="BAA77851.1"/>
    <property type="molecule type" value="Genomic_DNA"/>
</dbReference>
<dbReference type="EMBL" id="M11330">
    <property type="status" value="NOT_ANNOTATED_CDS"/>
    <property type="molecule type" value="Genomic_DNA"/>
</dbReference>
<dbReference type="PIR" id="H64741">
    <property type="entry name" value="H64741"/>
</dbReference>
<dbReference type="RefSeq" id="NP_414718.1">
    <property type="nucleotide sequence ID" value="NC_000913.3"/>
</dbReference>
<dbReference type="RefSeq" id="WP_001295561.1">
    <property type="nucleotide sequence ID" value="NZ_STEB01000032.1"/>
</dbReference>
<dbReference type="PDB" id="2ZPL">
    <property type="method" value="X-ray"/>
    <property type="resolution" value="1.70 A"/>
    <property type="chains" value="A/B/C=127-221"/>
</dbReference>
<dbReference type="PDB" id="2ZPM">
    <property type="method" value="X-ray"/>
    <property type="resolution" value="0.98 A"/>
    <property type="chains" value="A=222-309"/>
</dbReference>
<dbReference type="PDB" id="3ID1">
    <property type="method" value="X-ray"/>
    <property type="resolution" value="1.67 A"/>
    <property type="chains" value="A=127-220"/>
</dbReference>
<dbReference type="PDB" id="3ID2">
    <property type="method" value="X-ray"/>
    <property type="resolution" value="3.09 A"/>
    <property type="chains" value="A/B=222-309"/>
</dbReference>
<dbReference type="PDB" id="3ID3">
    <property type="method" value="X-ray"/>
    <property type="resolution" value="2.01 A"/>
    <property type="chains" value="A/B=222-309"/>
</dbReference>
<dbReference type="PDB" id="3ID4">
    <property type="method" value="X-ray"/>
    <property type="resolution" value="1.60 A"/>
    <property type="chains" value="A=222-307"/>
</dbReference>
<dbReference type="PDB" id="7W6X">
    <property type="method" value="X-ray"/>
    <property type="resolution" value="3.20 A"/>
    <property type="chains" value="A=1-450"/>
</dbReference>
<dbReference type="PDB" id="7W71">
    <property type="method" value="X-ray"/>
    <property type="resolution" value="3.20 A"/>
    <property type="chains" value="A/B=219-309"/>
</dbReference>
<dbReference type="PDBsum" id="2ZPL"/>
<dbReference type="PDBsum" id="2ZPM"/>
<dbReference type="PDBsum" id="3ID1"/>
<dbReference type="PDBsum" id="3ID2"/>
<dbReference type="PDBsum" id="3ID3"/>
<dbReference type="PDBsum" id="3ID4"/>
<dbReference type="PDBsum" id="7W6X"/>
<dbReference type="PDBsum" id="7W71"/>
<dbReference type="SMR" id="P0AEH1"/>
<dbReference type="BioGRID" id="4261736">
    <property type="interactions" value="104"/>
</dbReference>
<dbReference type="DIP" id="DIP-48061N"/>
<dbReference type="FunCoup" id="P0AEH1">
    <property type="interactions" value="607"/>
</dbReference>
<dbReference type="IntAct" id="P0AEH1">
    <property type="interactions" value="2"/>
</dbReference>
<dbReference type="STRING" id="511145.b0176"/>
<dbReference type="MEROPS" id="M50.004"/>
<dbReference type="TCDB" id="9.B.149.2.3">
    <property type="family name" value="the m50 peptidase (m50-p) family"/>
</dbReference>
<dbReference type="jPOST" id="P0AEH1"/>
<dbReference type="PaxDb" id="511145-b0176"/>
<dbReference type="EnsemblBacteria" id="AAC73287">
    <property type="protein sequence ID" value="AAC73287"/>
    <property type="gene ID" value="b0176"/>
</dbReference>
<dbReference type="GeneID" id="944871"/>
<dbReference type="KEGG" id="ecj:JW0171"/>
<dbReference type="KEGG" id="eco:b0176"/>
<dbReference type="KEGG" id="ecoc:C3026_00805"/>
<dbReference type="PATRIC" id="fig|1411691.4.peg.2103"/>
<dbReference type="EchoBASE" id="EB2331"/>
<dbReference type="eggNOG" id="COG0750">
    <property type="taxonomic scope" value="Bacteria"/>
</dbReference>
<dbReference type="HOGENOM" id="CLU_025778_0_2_6"/>
<dbReference type="InParanoid" id="P0AEH1"/>
<dbReference type="OMA" id="EYGHFWA"/>
<dbReference type="OrthoDB" id="9782003at2"/>
<dbReference type="PhylomeDB" id="P0AEH1"/>
<dbReference type="BioCyc" id="EcoCyc:EG12436-MONOMER"/>
<dbReference type="BioCyc" id="MetaCyc:EG12436-MONOMER"/>
<dbReference type="EvolutionaryTrace" id="P0AEH1"/>
<dbReference type="PRO" id="PR:P0AEH1"/>
<dbReference type="Proteomes" id="UP000000625">
    <property type="component" value="Chromosome"/>
</dbReference>
<dbReference type="GO" id="GO:0005886">
    <property type="term" value="C:plasma membrane"/>
    <property type="evidence" value="ECO:0000314"/>
    <property type="project" value="EcoCyc"/>
</dbReference>
<dbReference type="GO" id="GO:0043856">
    <property type="term" value="F:anti-sigma factor antagonist activity"/>
    <property type="evidence" value="ECO:0000314"/>
    <property type="project" value="EcoCyc"/>
</dbReference>
<dbReference type="GO" id="GO:0046872">
    <property type="term" value="F:metal ion binding"/>
    <property type="evidence" value="ECO:0007669"/>
    <property type="project" value="UniProtKB-KW"/>
</dbReference>
<dbReference type="GO" id="GO:0004222">
    <property type="term" value="F:metalloendopeptidase activity"/>
    <property type="evidence" value="ECO:0000314"/>
    <property type="project" value="EcoCyc"/>
</dbReference>
<dbReference type="GO" id="GO:0036460">
    <property type="term" value="P:cellular response to cell envelope stress"/>
    <property type="evidence" value="ECO:0000314"/>
    <property type="project" value="EcoCyc"/>
</dbReference>
<dbReference type="GO" id="GO:0045893">
    <property type="term" value="P:positive regulation of DNA-templated transcription"/>
    <property type="evidence" value="ECO:0000314"/>
    <property type="project" value="EcoCyc"/>
</dbReference>
<dbReference type="GO" id="GO:0006508">
    <property type="term" value="P:proteolysis"/>
    <property type="evidence" value="ECO:0007669"/>
    <property type="project" value="UniProtKB-KW"/>
</dbReference>
<dbReference type="CDD" id="cd23082">
    <property type="entry name" value="cpPDZ1_EcRseP-like"/>
    <property type="match status" value="1"/>
</dbReference>
<dbReference type="CDD" id="cd23083">
    <property type="entry name" value="cpPDZ2_EcRseP-like"/>
    <property type="match status" value="1"/>
</dbReference>
<dbReference type="CDD" id="cd06163">
    <property type="entry name" value="S2P-M50_PDZ_RseP-like"/>
    <property type="match status" value="1"/>
</dbReference>
<dbReference type="FunFam" id="2.30.42.10:FF:000094">
    <property type="entry name" value="Zinc metalloprotease"/>
    <property type="match status" value="1"/>
</dbReference>
<dbReference type="FunFam" id="2.30.42.10:FF:000095">
    <property type="entry name" value="Zinc metalloprotease"/>
    <property type="match status" value="1"/>
</dbReference>
<dbReference type="Gene3D" id="2.30.42.10">
    <property type="match status" value="2"/>
</dbReference>
<dbReference type="InterPro" id="IPR001478">
    <property type="entry name" value="PDZ"/>
</dbReference>
<dbReference type="InterPro" id="IPR041489">
    <property type="entry name" value="PDZ_6"/>
</dbReference>
<dbReference type="InterPro" id="IPR036034">
    <property type="entry name" value="PDZ_sf"/>
</dbReference>
<dbReference type="InterPro" id="IPR004387">
    <property type="entry name" value="Pept_M50_Zn"/>
</dbReference>
<dbReference type="InterPro" id="IPR008915">
    <property type="entry name" value="Peptidase_M50"/>
</dbReference>
<dbReference type="NCBIfam" id="NF008046">
    <property type="entry name" value="PRK10779.1"/>
    <property type="match status" value="1"/>
</dbReference>
<dbReference type="NCBIfam" id="TIGR00054">
    <property type="entry name" value="RIP metalloprotease RseP"/>
    <property type="match status" value="1"/>
</dbReference>
<dbReference type="PANTHER" id="PTHR42837:SF2">
    <property type="entry name" value="MEMBRANE METALLOPROTEASE ARASP2, CHLOROPLASTIC-RELATED"/>
    <property type="match status" value="1"/>
</dbReference>
<dbReference type="PANTHER" id="PTHR42837">
    <property type="entry name" value="REGULATOR OF SIGMA-E PROTEASE RSEP"/>
    <property type="match status" value="1"/>
</dbReference>
<dbReference type="Pfam" id="PF17820">
    <property type="entry name" value="PDZ_6"/>
    <property type="match status" value="1"/>
</dbReference>
<dbReference type="Pfam" id="PF02163">
    <property type="entry name" value="Peptidase_M50"/>
    <property type="match status" value="1"/>
</dbReference>
<dbReference type="SMART" id="SM00228">
    <property type="entry name" value="PDZ"/>
    <property type="match status" value="2"/>
</dbReference>
<dbReference type="SUPFAM" id="SSF50156">
    <property type="entry name" value="PDZ domain-like"/>
    <property type="match status" value="2"/>
</dbReference>
<dbReference type="PROSITE" id="PS50106">
    <property type="entry name" value="PDZ"/>
    <property type="match status" value="1"/>
</dbReference>
<dbReference type="PROSITE" id="PS00142">
    <property type="entry name" value="ZINC_PROTEASE"/>
    <property type="match status" value="1"/>
</dbReference>
<feature type="chain" id="PRO_0000088417" description="Regulator of sigma-E protease RseP">
    <location>
        <begin position="1"/>
        <end position="450"/>
    </location>
</feature>
<feature type="transmembrane region" description="Helical" evidence="1">
    <location>
        <begin position="1"/>
        <end position="21"/>
    </location>
</feature>
<feature type="topological domain" description="Periplasmic" evidence="21">
    <location>
        <begin position="22"/>
        <end position="103"/>
    </location>
</feature>
<feature type="transmembrane region" description="Helical" evidence="1">
    <location>
        <begin position="104"/>
        <end position="124"/>
    </location>
</feature>
<feature type="topological domain" description="Cytoplasmic" evidence="21">
    <location>
        <begin position="125"/>
        <end position="375"/>
    </location>
</feature>
<feature type="transmembrane region" description="Helical" evidence="1">
    <location>
        <begin position="376"/>
        <end position="396"/>
    </location>
</feature>
<feature type="topological domain" description="Periplasmic" evidence="21">
    <location>
        <begin position="397"/>
        <end position="429"/>
    </location>
</feature>
<feature type="transmembrane region" description="Helical" evidence="1">
    <location>
        <begin position="430"/>
        <end position="450"/>
    </location>
</feature>
<feature type="domain" description="PDZ 1" evidence="2">
    <location>
        <begin position="127"/>
        <end position="220"/>
    </location>
</feature>
<feature type="domain" description="PDZ 2" evidence="2">
    <location>
        <begin position="222"/>
        <end position="309"/>
    </location>
</feature>
<feature type="active site" evidence="19">
    <location>
        <position position="23"/>
    </location>
</feature>
<feature type="binding site" evidence="19">
    <location>
        <position position="22"/>
    </location>
    <ligand>
        <name>Zn(2+)</name>
        <dbReference type="ChEBI" id="CHEBI:29105"/>
        <note>catalytic</note>
    </ligand>
</feature>
<feature type="binding site" evidence="3">
    <location>
        <position position="26"/>
    </location>
    <ligand>
        <name>Zn(2+)</name>
        <dbReference type="ChEBI" id="CHEBI:29105"/>
        <note>catalytic</note>
    </ligand>
</feature>
<feature type="mutagenesis site" description="Loss of protease activity." evidence="5 6 8 11 13 16">
    <original>H</original>
    <variation>A</variation>
    <location>
        <position position="22"/>
    </location>
</feature>
<feature type="mutagenesis site" description="Loss of protease activity of RseA and signal peptides, does not complement deletion mutant. Binds substrate." evidence="5 6 8 11 13 16">
    <original>H</original>
    <variation>F</variation>
    <location>
        <position position="22"/>
    </location>
</feature>
<feature type="mutagenesis site" description="Low basal sigma-E activity, sigma-E not induced. No proteolysis of RseA." evidence="6 9 13">
    <original>E</original>
    <variation>A</variation>
    <location>
        <position position="23"/>
    </location>
</feature>
<feature type="mutagenesis site" description="Behaves like wild-type in vivo, slight reduction in RseA cleavage in vitro." evidence="6 9 13">
    <original>E</original>
    <variation>D</variation>
    <location>
        <position position="23"/>
    </location>
</feature>
<feature type="mutagenesis site" description="Does not complement deletion mutant. Abolishes production of the FecR cytoplasmic tail fragment." evidence="6 9 13 18">
    <original>E</original>
    <variation>Q</variation>
    <location>
        <position position="23"/>
    </location>
</feature>
<feature type="mutagenesis site" description="Loss of protease activity." evidence="6 9 13">
    <original>E</original>
    <variation>S</variation>
    <location>
        <position position="23"/>
    </location>
</feature>
<feature type="mutagenesis site" description="Does not complement deletion mutant." evidence="6">
    <original>H</original>
    <variation>F</variation>
    <location>
        <position position="26"/>
    </location>
</feature>
<feature type="mutagenesis site" description="No effect. Cleaves RseA without previous DegS cleavage; when associated with R-214." evidence="14">
    <original>A</original>
    <variation>V</variation>
    <location>
        <position position="115"/>
    </location>
</feature>
<feature type="mutagenesis site" description="Cuts RseA without previous DegS cleavage." evidence="14">
    <original>I</original>
    <variation>N</variation>
    <location>
        <position position="145"/>
    </location>
</feature>
<feature type="mutagenesis site" description="Cuts RseA without previous DegS cleavage." evidence="14">
    <original>L</original>
    <variation>P</variation>
    <location>
        <position position="151"/>
    </location>
</feature>
<feature type="mutagenesis site" description="Cuts RseA without previous DegS cleavage." evidence="14">
    <original>W</original>
    <variation>R</variation>
    <location>
        <position position="162"/>
    </location>
</feature>
<feature type="mutagenesis site" description="Cuts RseA without previous DegS cleavage." evidence="14">
    <original>L</original>
    <variation>S</variation>
    <location>
        <position position="169"/>
    </location>
</feature>
<feature type="mutagenesis site" description="Cuts RseA without previous DegS cleavage." evidence="14">
    <original>L</original>
    <variation>P</variation>
    <location>
        <position position="213"/>
    </location>
</feature>
<feature type="mutagenesis site" description="Cuts RseA without previous DegS cleavage." evidence="10 14">
    <original>G</original>
    <variation>E</variation>
    <variation>Q</variation>
    <location>
        <position position="214"/>
    </location>
</feature>
<feature type="mutagenesis site" description="Weakly cuts RseA without previous DegS cleavage. Stronger cleavage; when associated with V-115." evidence="10 14">
    <original>G</original>
    <variation>R</variation>
    <location>
        <position position="214"/>
    </location>
</feature>
<feature type="mutagenesis site" description="No cleavage of RseA in vitro (PubMed:19706448), cleavage of RseA (PubMed:23016873) in vivo." evidence="15 17">
    <original>I</original>
    <variation>A</variation>
    <location>
        <position position="215"/>
    </location>
</feature>
<feature type="mutagenesis site" description="Cuts RseA without previous DegS cleavage." evidence="10">
    <original>AA</original>
    <variation>KK</variation>
    <location>
        <begin position="234"/>
        <end position="235"/>
    </location>
</feature>
<feature type="mutagenesis site" description="Cuts RseA without previous DegS cleavage." evidence="10">
    <original>G</original>
    <variation>Q</variation>
    <location>
        <position position="243"/>
    </location>
</feature>
<feature type="mutagenesis site" description="Cuts RseA without previous DegS cleavage." evidence="10">
    <original>D</original>
    <variation>K</variation>
    <location>
        <position position="244"/>
    </location>
</feature>
<feature type="mutagenesis site" description="Cuts RseA without previous DegS cleavage." evidence="10">
    <original>I</original>
    <variation>Y</variation>
    <location>
        <position position="246"/>
    </location>
</feature>
<feature type="mutagenesis site" description="Does not complement deletion mutant." evidence="6">
    <original>V</original>
    <variation>VTDSYTQVASWTEPFPFSIQGDPRSDQETAFV</variation>
    <location>
        <position position="261"/>
    </location>
</feature>
<feature type="mutagenesis site" description="No cleavage of RseA in vitro (PubMed:19706448), cleavage of RseA (PubMed:23016873) in vivo." evidence="15 17">
    <original>I</original>
    <variation>A</variation>
    <location>
        <position position="304"/>
    </location>
</feature>
<feature type="mutagenesis site" description="Decreased substrate binding, retains some proteolytic activity." evidence="13">
    <original>N</original>
    <variation>C</variation>
    <variation>G</variation>
    <variation>L</variation>
    <location>
        <position position="389"/>
    </location>
</feature>
<feature type="mutagenesis site" description="No effect." evidence="13">
    <original>N</original>
    <variation>Q</variation>
    <location>
        <position position="389"/>
    </location>
</feature>
<feature type="mutagenesis site" description="Decreased substrate binding, retains some proteolytic activity." evidence="13">
    <original>N</original>
    <variation>C</variation>
    <location>
        <position position="394"/>
    </location>
</feature>
<feature type="mutagenesis site" description="Decreased substrate binding, retains some proteolytic activity." evidence="13">
    <original>P</original>
    <variation>C</variation>
    <location>
        <position position="397"/>
    </location>
</feature>
<feature type="mutagenesis site" description="Decreased substrate binding, retains some proteolytic activity." evidence="13">
    <original>P</original>
    <variation>C</variation>
    <location>
        <position position="399"/>
    </location>
</feature>
<feature type="mutagenesis site" description="Does not complement deletion mutant, loss of protease activity." evidence="6 8">
    <original>D</original>
    <variation>N</variation>
    <location>
        <position position="402"/>
    </location>
</feature>
<feature type="helix" evidence="26">
    <location>
        <begin position="2"/>
        <end position="33"/>
    </location>
</feature>
<feature type="strand" evidence="26">
    <location>
        <begin position="37"/>
        <end position="52"/>
    </location>
</feature>
<feature type="strand" evidence="26">
    <location>
        <begin position="58"/>
        <end position="72"/>
    </location>
</feature>
<feature type="turn" evidence="26">
    <location>
        <begin position="75"/>
        <end position="77"/>
    </location>
</feature>
<feature type="helix" evidence="26">
    <location>
        <begin position="84"/>
        <end position="87"/>
    </location>
</feature>
<feature type="helix" evidence="26">
    <location>
        <begin position="94"/>
        <end position="122"/>
    </location>
</feature>
<feature type="strand" evidence="23">
    <location>
        <begin position="130"/>
        <end position="134"/>
    </location>
</feature>
<feature type="helix" evidence="23">
    <location>
        <begin position="139"/>
        <end position="142"/>
    </location>
</feature>
<feature type="strand" evidence="23">
    <location>
        <begin position="150"/>
        <end position="154"/>
    </location>
</feature>
<feature type="helix" evidence="23">
    <location>
        <begin position="162"/>
        <end position="171"/>
    </location>
</feature>
<feature type="turn" evidence="23">
    <location>
        <begin position="172"/>
        <end position="174"/>
    </location>
</feature>
<feature type="strand" evidence="23">
    <location>
        <begin position="176"/>
        <end position="183"/>
    </location>
</feature>
<feature type="strand" evidence="23">
    <location>
        <begin position="191"/>
        <end position="196"/>
    </location>
</feature>
<feature type="turn" evidence="23">
    <location>
        <begin position="204"/>
        <end position="206"/>
    </location>
</feature>
<feature type="helix" evidence="23">
    <location>
        <begin position="209"/>
        <end position="212"/>
    </location>
</feature>
<feature type="strand" evidence="23">
    <location>
        <begin position="215"/>
        <end position="217"/>
    </location>
</feature>
<feature type="strand" evidence="22">
    <location>
        <begin position="227"/>
        <end position="229"/>
    </location>
</feature>
<feature type="strand" evidence="24">
    <location>
        <begin position="231"/>
        <end position="233"/>
    </location>
</feature>
<feature type="turn" evidence="22">
    <location>
        <begin position="234"/>
        <end position="236"/>
    </location>
</feature>
<feature type="strand" evidence="22">
    <location>
        <begin position="245"/>
        <end position="249"/>
    </location>
</feature>
<feature type="helix" evidence="22">
    <location>
        <begin position="257"/>
        <end position="266"/>
    </location>
</feature>
<feature type="strand" evidence="26">
    <location>
        <begin position="268"/>
        <end position="270"/>
    </location>
</feature>
<feature type="strand" evidence="22">
    <location>
        <begin position="272"/>
        <end position="278"/>
    </location>
</feature>
<feature type="strand" evidence="22">
    <location>
        <begin position="281"/>
        <end position="287"/>
    </location>
</feature>
<feature type="strand" evidence="22">
    <location>
        <begin position="290"/>
        <end position="292"/>
    </location>
</feature>
<feature type="strand" evidence="25">
    <location>
        <begin position="295"/>
        <end position="297"/>
    </location>
</feature>
<feature type="strand" evidence="22">
    <location>
        <begin position="299"/>
        <end position="301"/>
    </location>
</feature>
<feature type="strand" evidence="25">
    <location>
        <begin position="304"/>
        <end position="307"/>
    </location>
</feature>
<feature type="helix" evidence="26">
    <location>
        <begin position="313"/>
        <end position="315"/>
    </location>
</feature>
<feature type="helix" evidence="26">
    <location>
        <begin position="323"/>
        <end position="350"/>
    </location>
</feature>
<feature type="helix" evidence="26">
    <location>
        <begin position="355"/>
        <end position="357"/>
    </location>
</feature>
<feature type="helix" evidence="26">
    <location>
        <begin position="361"/>
        <end position="374"/>
    </location>
</feature>
<feature type="helix" evidence="26">
    <location>
        <begin position="376"/>
        <end position="394"/>
    </location>
</feature>
<feature type="helix" evidence="26">
    <location>
        <begin position="402"/>
        <end position="415"/>
    </location>
</feature>
<feature type="helix" evidence="26">
    <location>
        <begin position="425"/>
        <end position="446"/>
    </location>
</feature>
<gene>
    <name type="primary">rseP</name>
    <name type="synonym">ecfE</name>
    <name type="synonym">yaeL</name>
    <name type="ordered locus">b0176</name>
    <name type="ordered locus">JW0171</name>
</gene>
<name>RSEP_ECOLI</name>
<organism>
    <name type="scientific">Escherichia coli (strain K12)</name>
    <dbReference type="NCBI Taxonomy" id="83333"/>
    <lineage>
        <taxon>Bacteria</taxon>
        <taxon>Pseudomonadati</taxon>
        <taxon>Pseudomonadota</taxon>
        <taxon>Gammaproteobacteria</taxon>
        <taxon>Enterobacterales</taxon>
        <taxon>Enterobacteriaceae</taxon>
        <taxon>Escherichia</taxon>
    </lineage>
</organism>